<organismHost>
    <name type="scientific">Oryctolagus cuniculus</name>
    <name type="common">Rabbit</name>
    <dbReference type="NCBI Taxonomy" id="9986"/>
</organismHost>
<sequence length="635" mass="73320">MNLAVIRLFKHHVNNIPNILPHQLATLDYLVRSIIDENKSVLLFHIMGSGKTIIALLFALVASRFKKVYILVPNINILKIFNYSMDVVINLFNADYILENIFIYSTTSFYSINYNDNVINYNGLSRYNNAIFIIDEAHNIFGNNTGELMTVIKNRNKIPFLLLSGSPITNTPITLSNIISLMSDEEINFSDIIIQGKKVFQILLNEHGVNVLKNILKGRISYYEMPDTDLPGIQYHGKSFLDTRVVYCNMSKLQEKDYINVRKMCNNEMFEKNMNNVSLAVLGQLNLINNLDILFQEQDKELYPNLKINNGVLYGEELVTLNISSKFKYFINKIENLKGKHFIYFSNSTYGGLIIKYIMLSNGYSEYNGSQGTYPKLIHGKPKTFAIVTSKMKASLEDLLVTYNSLANDDGSQIMFLFSSNIMSESYTLKEVRNIWFMTIPDTFSQYNQILGRSIRKFSYKDITQPVNVYLLATVYSDFNDTIESLDDYSLEEINTLPFDIKKLLYLKFKTKETNRIYSILESISDSYTQPPHPHIVEIVLGEIVRQFFYHHSRIKQNDERLLTAVKSVLTNTEAAKKYIKEIVDGHFFVSNKVFDKSLLYAYKDEIITVPFKLSHEPFVWGVNFRKEYNVVSSP</sequence>
<dbReference type="EC" id="3.6.4.-"/>
<dbReference type="EMBL" id="M74532">
    <property type="status" value="NOT_ANNOTATED_CDS"/>
    <property type="molecule type" value="Genomic_DNA"/>
</dbReference>
<dbReference type="EMBL" id="AF170722">
    <property type="protein sequence ID" value="AAF17965.1"/>
    <property type="molecule type" value="Genomic_DNA"/>
</dbReference>
<dbReference type="PIR" id="A41700">
    <property type="entry name" value="A41700"/>
</dbReference>
<dbReference type="RefSeq" id="NP_051970.1">
    <property type="nucleotide sequence ID" value="NC_001266.1"/>
</dbReference>
<dbReference type="SMR" id="P32096"/>
<dbReference type="KEGG" id="vg:1486926"/>
<dbReference type="Proteomes" id="UP000000868">
    <property type="component" value="Segment"/>
</dbReference>
<dbReference type="GO" id="GO:0044423">
    <property type="term" value="C:virion component"/>
    <property type="evidence" value="ECO:0007669"/>
    <property type="project" value="UniProtKB-KW"/>
</dbReference>
<dbReference type="GO" id="GO:0005524">
    <property type="term" value="F:ATP binding"/>
    <property type="evidence" value="ECO:0007669"/>
    <property type="project" value="UniProtKB-KW"/>
</dbReference>
<dbReference type="GO" id="GO:0003677">
    <property type="term" value="F:DNA binding"/>
    <property type="evidence" value="ECO:0007669"/>
    <property type="project" value="UniProtKB-KW"/>
</dbReference>
<dbReference type="GO" id="GO:0004386">
    <property type="term" value="F:helicase activity"/>
    <property type="evidence" value="ECO:0007669"/>
    <property type="project" value="UniProtKB-KW"/>
</dbReference>
<dbReference type="GO" id="GO:0016787">
    <property type="term" value="F:hydrolase activity"/>
    <property type="evidence" value="ECO:0007669"/>
    <property type="project" value="UniProtKB-KW"/>
</dbReference>
<dbReference type="Gene3D" id="3.40.50.300">
    <property type="entry name" value="P-loop containing nucleotide triphosphate hydrolases"/>
    <property type="match status" value="2"/>
</dbReference>
<dbReference type="InterPro" id="IPR002464">
    <property type="entry name" value="DNA/RNA_helicase_DEAH_CS"/>
</dbReference>
<dbReference type="InterPro" id="IPR006935">
    <property type="entry name" value="Helicase/UvrB_N"/>
</dbReference>
<dbReference type="InterPro" id="IPR014001">
    <property type="entry name" value="Helicase_ATP-bd"/>
</dbReference>
<dbReference type="InterPro" id="IPR001650">
    <property type="entry name" value="Helicase_C-like"/>
</dbReference>
<dbReference type="InterPro" id="IPR027417">
    <property type="entry name" value="P-loop_NTPase"/>
</dbReference>
<dbReference type="Pfam" id="PF00271">
    <property type="entry name" value="Helicase_C"/>
    <property type="match status" value="1"/>
</dbReference>
<dbReference type="Pfam" id="PF04851">
    <property type="entry name" value="ResIII"/>
    <property type="match status" value="1"/>
</dbReference>
<dbReference type="SMART" id="SM00487">
    <property type="entry name" value="DEXDc"/>
    <property type="match status" value="1"/>
</dbReference>
<dbReference type="SUPFAM" id="SSF52540">
    <property type="entry name" value="P-loop containing nucleoside triphosphate hydrolases"/>
    <property type="match status" value="2"/>
</dbReference>
<dbReference type="PROSITE" id="PS00690">
    <property type="entry name" value="DEAH_ATP_HELICASE"/>
    <property type="match status" value="1"/>
</dbReference>
<dbReference type="PROSITE" id="PS51192">
    <property type="entry name" value="HELICASE_ATP_BIND_1"/>
    <property type="match status" value="1"/>
</dbReference>
<dbReference type="PROSITE" id="PS51194">
    <property type="entry name" value="HELICASE_CTER"/>
    <property type="match status" value="1"/>
</dbReference>
<proteinExistence type="inferred from homology"/>
<protein>
    <recommendedName>
        <fullName>Early transcription factor 70 kDa subunit</fullName>
        <ecNumber>3.6.4.-</ecNumber>
    </recommendedName>
    <alternativeName>
        <fullName>ATP-dependent helicase VETFS</fullName>
    </alternativeName>
    <alternativeName>
        <fullName>ETF small subunit</fullName>
    </alternativeName>
</protein>
<gene>
    <name type="primary">VETFS</name>
    <name type="ordered locus">s081R</name>
</gene>
<reference key="1">
    <citation type="journal article" date="1991" name="Virology">
        <title>Sequence and analysis of a portion of the genomes of Shope fibroma virus and malignant rabbit fibroma virus that is important for viral replication in lymphocytes.</title>
        <authorList>
            <person name="Strayer D.S."/>
            <person name="Jerng H.H."/>
            <person name="O'Connor K."/>
        </authorList>
    </citation>
    <scope>NUCLEOTIDE SEQUENCE [GENOMIC DNA]</scope>
</reference>
<reference key="2">
    <citation type="journal article" date="1999" name="Virology">
        <title>The complete genome sequence of shope (Rabbit) fibroma virus.</title>
        <authorList>
            <person name="Willer D.O."/>
            <person name="McFadden G."/>
            <person name="Evans D.H."/>
        </authorList>
    </citation>
    <scope>NUCLEOTIDE SEQUENCE [LARGE SCALE GENOMIC DNA]</scope>
</reference>
<accession>P32096</accession>
<accession>Q9Q8Z6</accession>
<name>ETF1_RFVKA</name>
<organism>
    <name type="scientific">Rabbit fibroma virus (strain Kasza)</name>
    <name type="common">RFV</name>
    <name type="synonym">Shope fibroma virus (strain Kasza)</name>
    <dbReference type="NCBI Taxonomy" id="10272"/>
    <lineage>
        <taxon>Viruses</taxon>
        <taxon>Varidnaviria</taxon>
        <taxon>Bamfordvirae</taxon>
        <taxon>Nucleocytoviricota</taxon>
        <taxon>Pokkesviricetes</taxon>
        <taxon>Chitovirales</taxon>
        <taxon>Poxviridae</taxon>
        <taxon>Chordopoxvirinae</taxon>
        <taxon>Leporipoxvirus</taxon>
        <taxon>Rabbit fibroma virus</taxon>
    </lineage>
</organism>
<feature type="chain" id="PRO_0000099077" description="Early transcription factor 70 kDa subunit">
    <location>
        <begin position="1"/>
        <end position="635"/>
    </location>
</feature>
<feature type="domain" description="Helicase ATP-binding" evidence="2">
    <location>
        <begin position="32"/>
        <end position="185"/>
    </location>
</feature>
<feature type="domain" description="Helicase C-terminal" evidence="3">
    <location>
        <begin position="326"/>
        <end position="505"/>
    </location>
</feature>
<feature type="short sequence motif" description="DEXH box">
    <location>
        <begin position="135"/>
        <end position="138"/>
    </location>
</feature>
<feature type="binding site" evidence="2">
    <location>
        <begin position="45"/>
        <end position="52"/>
    </location>
    <ligand>
        <name>ATP</name>
        <dbReference type="ChEBI" id="CHEBI:30616"/>
    </ligand>
</feature>
<feature type="sequence conflict" description="In Ref. 1." evidence="4" ref="1">
    <original>S</original>
    <variation>G</variation>
    <location>
        <position position="33"/>
    </location>
</feature>
<evidence type="ECO:0000250" key="1"/>
<evidence type="ECO:0000255" key="2">
    <source>
        <dbReference type="PROSITE-ProRule" id="PRU00541"/>
    </source>
</evidence>
<evidence type="ECO:0000255" key="3">
    <source>
        <dbReference type="PROSITE-ProRule" id="PRU00542"/>
    </source>
</evidence>
<evidence type="ECO:0000305" key="4"/>
<keyword id="KW-0010">Activator</keyword>
<keyword id="KW-0067">ATP-binding</keyword>
<keyword id="KW-0238">DNA-binding</keyword>
<keyword id="KW-0347">Helicase</keyword>
<keyword id="KW-0378">Hydrolase</keyword>
<keyword id="KW-0547">Nucleotide-binding</keyword>
<keyword id="KW-1185">Reference proteome</keyword>
<keyword id="KW-0804">Transcription</keyword>
<keyword id="KW-0805">Transcription regulation</keyword>
<keyword id="KW-0946">Virion</keyword>
<comment type="function">
    <text evidence="1">Acts with RNA polymerase to initiate transcription from early gene promoters. Is recruited by the RPO-associated protein of 94 kDa (RAP94) to form the early transcription complex, which also contains the core RNA polymerase. ETF heterodimer binds to early gene promoters (By similarity).</text>
</comment>
<comment type="subunit">
    <text evidence="1">Heterodimer of a 70 kDa and a 82 kDa subunit. Part of the early transcription complex composed of ETF, RAP94, and the DNA-directed RNA polymerase (By similarity).</text>
</comment>
<comment type="subcellular location">
    <subcellularLocation>
        <location evidence="4">Virion</location>
    </subcellularLocation>
    <text>All the enzymes and other proteins required to synthesize early mRNAs are packaged within the virion core along with the DNA genome. This is necessary because viral early mRNAs are synthesized within minutes after virus entry into the cell and are extruded through pores in the core particle.</text>
</comment>
<comment type="similarity">
    <text evidence="4">Belongs to the helicase family. VETF subfamily.</text>
</comment>